<proteinExistence type="inferred from homology"/>
<feature type="chain" id="PRO_0000180309" description="3-oxoacyl-[acyl-carrier-protein] synthase 1">
    <location>
        <begin position="1"/>
        <end position="407"/>
    </location>
</feature>
<feature type="domain" description="Ketosynthase family 3 (KS3)" evidence="2">
    <location>
        <begin position="1"/>
        <end position="406"/>
    </location>
</feature>
<feature type="active site" description="For beta-ketoacyl synthase activity" evidence="2">
    <location>
        <position position="164"/>
    </location>
</feature>
<feature type="active site" description="For beta-ketoacyl synthase activity" evidence="2">
    <location>
        <position position="300"/>
    </location>
</feature>
<feature type="active site" description="For beta-ketoacyl synthase activity" evidence="2">
    <location>
        <position position="336"/>
    </location>
</feature>
<reference key="1">
    <citation type="journal article" date="2002" name="Science">
        <title>50 million years of genomic stasis in endosymbiotic bacteria.</title>
        <authorList>
            <person name="Tamas I."/>
            <person name="Klasson L."/>
            <person name="Canbaeck B."/>
            <person name="Naeslund A.K."/>
            <person name="Eriksson A.-S."/>
            <person name="Wernegreen J.J."/>
            <person name="Sandstroem J.P."/>
            <person name="Moran N.A."/>
            <person name="Andersson S.G.E."/>
        </authorList>
    </citation>
    <scope>NUCLEOTIDE SEQUENCE [LARGE SCALE GENOMIC DNA]</scope>
    <source>
        <strain>Sg</strain>
    </source>
</reference>
<keyword id="KW-0012">Acyltransferase</keyword>
<keyword id="KW-0963">Cytoplasm</keyword>
<keyword id="KW-0275">Fatty acid biosynthesis</keyword>
<keyword id="KW-0276">Fatty acid metabolism</keyword>
<keyword id="KW-0444">Lipid biosynthesis</keyword>
<keyword id="KW-0443">Lipid metabolism</keyword>
<keyword id="KW-0808">Transferase</keyword>
<comment type="function">
    <text evidence="1">Involved in the type II fatty acid elongation cycle. Catalyzes the elongation of a wide range of acyl-ACP by the addition of two carbons from malonyl-ACP to an acyl acceptor. Can also use unsaturated fatty acids. Catalyzes a key reaction in unsaturated fatty acid (UFA) synthesis, the elongation of the cis-3-decenoyl-ACP produced by FabA.</text>
</comment>
<comment type="catalytic activity">
    <reaction evidence="1">
        <text>a fatty acyl-[ACP] + malonyl-[ACP] + H(+) = a 3-oxoacyl-[ACP] + holo-[ACP] + CO2</text>
        <dbReference type="Rhea" id="RHEA:22836"/>
        <dbReference type="Rhea" id="RHEA-COMP:9623"/>
        <dbReference type="Rhea" id="RHEA-COMP:9685"/>
        <dbReference type="Rhea" id="RHEA-COMP:9916"/>
        <dbReference type="Rhea" id="RHEA-COMP:14125"/>
        <dbReference type="ChEBI" id="CHEBI:15378"/>
        <dbReference type="ChEBI" id="CHEBI:16526"/>
        <dbReference type="ChEBI" id="CHEBI:64479"/>
        <dbReference type="ChEBI" id="CHEBI:78449"/>
        <dbReference type="ChEBI" id="CHEBI:78776"/>
        <dbReference type="ChEBI" id="CHEBI:138651"/>
        <dbReference type="EC" id="2.3.1.41"/>
    </reaction>
    <physiologicalReaction direction="left-to-right" evidence="1">
        <dbReference type="Rhea" id="RHEA:22837"/>
    </physiologicalReaction>
</comment>
<comment type="catalytic activity">
    <reaction evidence="1">
        <text>(3Z)-decenoyl-[ACP] + malonyl-[ACP] + H(+) = 3-oxo-(5Z)-dodecenoyl-[ACP] + holo-[ACP] + CO2</text>
        <dbReference type="Rhea" id="RHEA:54940"/>
        <dbReference type="Rhea" id="RHEA-COMP:9623"/>
        <dbReference type="Rhea" id="RHEA-COMP:9685"/>
        <dbReference type="Rhea" id="RHEA-COMP:9927"/>
        <dbReference type="Rhea" id="RHEA-COMP:14042"/>
        <dbReference type="ChEBI" id="CHEBI:15378"/>
        <dbReference type="ChEBI" id="CHEBI:16526"/>
        <dbReference type="ChEBI" id="CHEBI:64479"/>
        <dbReference type="ChEBI" id="CHEBI:78449"/>
        <dbReference type="ChEBI" id="CHEBI:78798"/>
        <dbReference type="ChEBI" id="CHEBI:138410"/>
    </reaction>
    <physiologicalReaction direction="left-to-right" evidence="1">
        <dbReference type="Rhea" id="RHEA:54941"/>
    </physiologicalReaction>
</comment>
<comment type="pathway">
    <text evidence="1">Lipid metabolism; fatty acid biosynthesis.</text>
</comment>
<comment type="subunit">
    <text evidence="1">Homodimer.</text>
</comment>
<comment type="subcellular location">
    <subcellularLocation>
        <location evidence="1">Cytoplasm</location>
    </subcellularLocation>
</comment>
<comment type="similarity">
    <text evidence="3">Belongs to the thiolase-like superfamily. Beta-ketoacyl-ACP synthases family.</text>
</comment>
<name>FABB_BUCAP</name>
<dbReference type="EC" id="2.3.1.41" evidence="1"/>
<dbReference type="EMBL" id="AE013218">
    <property type="protein sequence ID" value="AAM67654.1"/>
    <property type="molecule type" value="Genomic_DNA"/>
</dbReference>
<dbReference type="RefSeq" id="WP_011053620.1">
    <property type="nucleotide sequence ID" value="NC_004061.1"/>
</dbReference>
<dbReference type="SMR" id="Q8KA28"/>
<dbReference type="STRING" id="198804.BUsg_084"/>
<dbReference type="GeneID" id="93003552"/>
<dbReference type="KEGG" id="bas:BUsg_084"/>
<dbReference type="eggNOG" id="COG0304">
    <property type="taxonomic scope" value="Bacteria"/>
</dbReference>
<dbReference type="HOGENOM" id="CLU_000022_69_2_6"/>
<dbReference type="UniPathway" id="UPA00094"/>
<dbReference type="Proteomes" id="UP000000416">
    <property type="component" value="Chromosome"/>
</dbReference>
<dbReference type="GO" id="GO:0005829">
    <property type="term" value="C:cytosol"/>
    <property type="evidence" value="ECO:0007669"/>
    <property type="project" value="TreeGrafter"/>
</dbReference>
<dbReference type="GO" id="GO:0004315">
    <property type="term" value="F:3-oxoacyl-[acyl-carrier-protein] synthase activity"/>
    <property type="evidence" value="ECO:0007669"/>
    <property type="project" value="UniProtKB-EC"/>
</dbReference>
<dbReference type="GO" id="GO:0006633">
    <property type="term" value="P:fatty acid biosynthetic process"/>
    <property type="evidence" value="ECO:0007669"/>
    <property type="project" value="UniProtKB-UniPathway"/>
</dbReference>
<dbReference type="CDD" id="cd00834">
    <property type="entry name" value="KAS_I_II"/>
    <property type="match status" value="1"/>
</dbReference>
<dbReference type="FunFam" id="3.40.47.10:FF:000006">
    <property type="entry name" value="3-oxoacyl-[acyl-carrier-protein] synthase I"/>
    <property type="match status" value="1"/>
</dbReference>
<dbReference type="Gene3D" id="3.40.47.10">
    <property type="match status" value="1"/>
</dbReference>
<dbReference type="InterPro" id="IPR000794">
    <property type="entry name" value="Beta-ketoacyl_synthase"/>
</dbReference>
<dbReference type="InterPro" id="IPR018201">
    <property type="entry name" value="Ketoacyl_synth_AS"/>
</dbReference>
<dbReference type="InterPro" id="IPR014031">
    <property type="entry name" value="Ketoacyl_synth_C"/>
</dbReference>
<dbReference type="InterPro" id="IPR014030">
    <property type="entry name" value="Ketoacyl_synth_N"/>
</dbReference>
<dbReference type="InterPro" id="IPR020841">
    <property type="entry name" value="PKS_Beta-ketoAc_synthase_dom"/>
</dbReference>
<dbReference type="InterPro" id="IPR016039">
    <property type="entry name" value="Thiolase-like"/>
</dbReference>
<dbReference type="PANTHER" id="PTHR11712:SF306">
    <property type="entry name" value="3-OXOACYL-[ACYL-CARRIER-PROTEIN] SYNTHASE 1"/>
    <property type="match status" value="1"/>
</dbReference>
<dbReference type="PANTHER" id="PTHR11712">
    <property type="entry name" value="POLYKETIDE SYNTHASE-RELATED"/>
    <property type="match status" value="1"/>
</dbReference>
<dbReference type="Pfam" id="PF00109">
    <property type="entry name" value="ketoacyl-synt"/>
    <property type="match status" value="1"/>
</dbReference>
<dbReference type="Pfam" id="PF02801">
    <property type="entry name" value="Ketoacyl-synt_C"/>
    <property type="match status" value="1"/>
</dbReference>
<dbReference type="SMART" id="SM00825">
    <property type="entry name" value="PKS_KS"/>
    <property type="match status" value="1"/>
</dbReference>
<dbReference type="SUPFAM" id="SSF53901">
    <property type="entry name" value="Thiolase-like"/>
    <property type="match status" value="2"/>
</dbReference>
<dbReference type="PROSITE" id="PS00606">
    <property type="entry name" value="KS3_1"/>
    <property type="match status" value="1"/>
</dbReference>
<dbReference type="PROSITE" id="PS52004">
    <property type="entry name" value="KS3_2"/>
    <property type="match status" value="1"/>
</dbReference>
<protein>
    <recommendedName>
        <fullName evidence="1">3-oxoacyl-[acyl-carrier-protein] synthase 1</fullName>
        <ecNumber evidence="1">2.3.1.41</ecNumber>
    </recommendedName>
    <alternativeName>
        <fullName evidence="1">3-oxoacyl-[acyl-carrier-protein] synthase I</fullName>
    </alternativeName>
    <alternativeName>
        <fullName evidence="1">Beta-ketoacyl-ACP synthase I</fullName>
        <shortName evidence="1">KAS I</shortName>
    </alternativeName>
</protein>
<accession>Q8KA28</accession>
<organism>
    <name type="scientific">Buchnera aphidicola subsp. Schizaphis graminum (strain Sg)</name>
    <dbReference type="NCBI Taxonomy" id="198804"/>
    <lineage>
        <taxon>Bacteria</taxon>
        <taxon>Pseudomonadati</taxon>
        <taxon>Pseudomonadota</taxon>
        <taxon>Gammaproteobacteria</taxon>
        <taxon>Enterobacterales</taxon>
        <taxon>Erwiniaceae</taxon>
        <taxon>Buchnera</taxon>
    </lineage>
</organism>
<gene>
    <name type="primary">fabB</name>
    <name type="ordered locus">BUsg_084</name>
</gene>
<evidence type="ECO:0000250" key="1">
    <source>
        <dbReference type="UniProtKB" id="P0A953"/>
    </source>
</evidence>
<evidence type="ECO:0000255" key="2">
    <source>
        <dbReference type="PROSITE-ProRule" id="PRU01348"/>
    </source>
</evidence>
<evidence type="ECO:0000305" key="3"/>
<sequence>MKRVVITGFGIISSIGNNKKEVLNSLYNGISGITFSEEMKESGMRSQVWGNIKLENKKFFKKNKISRFMNNGSIYAFLSMEQAIKDANLQTKQYQKNPRIGIIAGSGGGFPKYHIQGIDAIRSNRGLNSVSPYIAIKAMNSGISACLSTLFKIYGVNYSISSACATSGHCIGNAFELIKFGKQDLIFAGGGEEVSWELAYEFDAMKALSSNFNKNPTKSSRVYDVNRDGFVISGGGGIIVIEELNCALSRSAHIYAEIIGYAATSDGKDMVVPSGDGAVRCMNLAKKQNKMLFIDYLNVHGTSTKIGDLIELEAIKKSFFHEKKPMISATKSMTGHALGVSGVHEIIYTLLMMKYNFIAPSINIETIEPSADNMNIVQKTFHKKIKTALSNSFGFGGTNVSLILKKY</sequence>